<reference key="1">
    <citation type="submission" date="1993-09" db="EMBL/GenBank/DDBJ databases">
        <authorList>
            <person name="Martin T.C."/>
            <person name="Hughes S.L."/>
            <person name="Hughes K.J."/>
            <person name="Dawson M."/>
        </authorList>
    </citation>
    <scope>NUCLEOTIDE SEQUENCE [GENOMIC DNA]</scope>
    <source>
        <strain>Anglo-Nubian</strain>
        <tissue>Peripheral blood lymphocyte</tissue>
    </source>
</reference>
<reference key="2">
    <citation type="journal article" date="1996" name="J. Gen. Virol.">
        <title>Novel polymorphisms in the caprine PrP gene: a codon 142 mutation associated with scrapie incubation period.</title>
        <authorList>
            <person name="Goldmann W."/>
            <person name="Martin T."/>
            <person name="Foster J."/>
            <person name="Hughes S."/>
            <person name="Smith G."/>
            <person name="Hughes K."/>
            <person name="Dawson M."/>
            <person name="Hunter N."/>
        </authorList>
    </citation>
    <scope>NUCLEOTIDE SEQUENCE [GENOMIC DNA]</scope>
    <scope>VARIANT MET-142</scope>
    <scope>POLYMORPHISM</scope>
    <source>
        <strain>Anglo-Nubian</strain>
    </source>
</reference>
<reference key="3">
    <citation type="journal article" date="1997" name="J. Gen. Virol.">
        <authorList>
            <person name="Goldmann W."/>
            <person name="Martin T."/>
            <person name="Foster J."/>
            <person name="Hughes S."/>
            <person name="Smith G."/>
            <person name="Hughes K."/>
            <person name="Dawson M."/>
            <person name="Hunter N."/>
        </authorList>
    </citation>
    <scope>ERRATUM OF PUBMED:8922485</scope>
</reference>
<reference key="4">
    <citation type="journal article" date="1995" name="J. Comp. Pathol.">
        <title>Spongiform central nervous system myelinopathy in African dwarf goats.</title>
        <authorList>
            <person name="Obermaier G."/>
            <person name="Kretzschmar H.A."/>
            <person name="Hafner A."/>
            <person name="Heubeck D."/>
            <person name="Dahme E."/>
        </authorList>
    </citation>
    <scope>NUCLEOTIDE SEQUENCE [GENOMIC DNA]</scope>
    <source>
        <strain>African dwarf</strain>
        <tissue>Blood</tissue>
    </source>
</reference>
<accession>P52113</accession>
<proteinExistence type="inferred from homology"/>
<feature type="signal peptide" evidence="1">
    <location>
        <begin position="1"/>
        <end position="24"/>
    </location>
</feature>
<feature type="chain" id="PRO_0000025641" description="Major prion protein">
    <location>
        <begin position="25"/>
        <end position="233"/>
    </location>
</feature>
<feature type="propeptide" id="PRO_0000025642" description="Removed in mature form" evidence="5">
    <location>
        <begin position="234"/>
        <end position="256"/>
    </location>
</feature>
<feature type="repeat" description="1">
    <location>
        <begin position="54"/>
        <end position="62"/>
    </location>
</feature>
<feature type="repeat" description="2">
    <location>
        <begin position="63"/>
        <end position="70"/>
    </location>
</feature>
<feature type="repeat" description="3">
    <location>
        <begin position="71"/>
        <end position="78"/>
    </location>
</feature>
<feature type="repeat" description="4">
    <location>
        <begin position="79"/>
        <end position="86"/>
    </location>
</feature>
<feature type="repeat" description="5">
    <location>
        <begin position="87"/>
        <end position="95"/>
    </location>
</feature>
<feature type="region of interest" description="Interaction with GRB2, ERI3 and SYN1" evidence="4">
    <location>
        <begin position="25"/>
        <end position="233"/>
    </location>
</feature>
<feature type="region of interest" description="Disordered" evidence="6">
    <location>
        <begin position="28"/>
        <end position="110"/>
    </location>
</feature>
<feature type="region of interest" description="5 X 8 AA tandem repeats of P-H-G-G-G-W-G-Q">
    <location>
        <begin position="54"/>
        <end position="95"/>
    </location>
</feature>
<feature type="compositionally biased region" description="Gly residues" evidence="6">
    <location>
        <begin position="55"/>
        <end position="97"/>
    </location>
</feature>
<feature type="binding site" evidence="2">
    <location>
        <position position="64"/>
    </location>
    <ligand>
        <name>Cu(2+)</name>
        <dbReference type="ChEBI" id="CHEBI:29036"/>
        <label>1</label>
    </ligand>
</feature>
<feature type="binding site" evidence="2">
    <location>
        <position position="65"/>
    </location>
    <ligand>
        <name>Cu(2+)</name>
        <dbReference type="ChEBI" id="CHEBI:29036"/>
        <label>1</label>
    </ligand>
</feature>
<feature type="binding site" evidence="2">
    <location>
        <position position="66"/>
    </location>
    <ligand>
        <name>Cu(2+)</name>
        <dbReference type="ChEBI" id="CHEBI:29036"/>
        <label>1</label>
    </ligand>
</feature>
<feature type="binding site" evidence="2">
    <location>
        <position position="72"/>
    </location>
    <ligand>
        <name>Cu(2+)</name>
        <dbReference type="ChEBI" id="CHEBI:29036"/>
        <label>2</label>
    </ligand>
</feature>
<feature type="binding site" evidence="2">
    <location>
        <position position="73"/>
    </location>
    <ligand>
        <name>Cu(2+)</name>
        <dbReference type="ChEBI" id="CHEBI:29036"/>
        <label>2</label>
    </ligand>
</feature>
<feature type="binding site" evidence="2">
    <location>
        <position position="74"/>
    </location>
    <ligand>
        <name>Cu(2+)</name>
        <dbReference type="ChEBI" id="CHEBI:29036"/>
        <label>2</label>
    </ligand>
</feature>
<feature type="binding site" evidence="2">
    <location>
        <position position="80"/>
    </location>
    <ligand>
        <name>Cu(2+)</name>
        <dbReference type="ChEBI" id="CHEBI:29036"/>
        <label>3</label>
    </ligand>
</feature>
<feature type="binding site" evidence="2">
    <location>
        <position position="81"/>
    </location>
    <ligand>
        <name>Cu(2+)</name>
        <dbReference type="ChEBI" id="CHEBI:29036"/>
        <label>3</label>
    </ligand>
</feature>
<feature type="binding site" evidence="2">
    <location>
        <position position="82"/>
    </location>
    <ligand>
        <name>Cu(2+)</name>
        <dbReference type="ChEBI" id="CHEBI:29036"/>
        <label>3</label>
    </ligand>
</feature>
<feature type="binding site" evidence="2">
    <location>
        <position position="88"/>
    </location>
    <ligand>
        <name>Cu(2+)</name>
        <dbReference type="ChEBI" id="CHEBI:29036"/>
        <label>4</label>
    </ligand>
</feature>
<feature type="binding site" evidence="2">
    <location>
        <position position="90"/>
    </location>
    <ligand>
        <name>Cu(2+)</name>
        <dbReference type="ChEBI" id="CHEBI:29036"/>
        <label>4</label>
    </ligand>
</feature>
<feature type="binding site" evidence="2">
    <location>
        <position position="91"/>
    </location>
    <ligand>
        <name>Cu(2+)</name>
        <dbReference type="ChEBI" id="CHEBI:29036"/>
        <label>4</label>
    </ligand>
</feature>
<feature type="lipid moiety-binding region" description="GPI-anchor amidated alanine" evidence="5">
    <location>
        <position position="233"/>
    </location>
</feature>
<feature type="glycosylation site" description="N-linked (GlcNAc...) asparagine" evidence="5">
    <location>
        <position position="184"/>
    </location>
</feature>
<feature type="glycosylation site" description="N-linked (GlcNAc...) asparagine" evidence="5">
    <location>
        <position position="200"/>
    </location>
</feature>
<feature type="disulfide bond" evidence="3">
    <location>
        <begin position="182"/>
        <end position="217"/>
    </location>
</feature>
<feature type="sequence variant" description="Appears to be associated with differing disease incubation periods in goats experimentally infected with isolates of bovine spongiform encephalopathy or sheep scrapie." evidence="7">
    <original>I</original>
    <variation>M</variation>
    <location>
        <position position="142"/>
    </location>
</feature>
<name>PRIO_CAPHI</name>
<gene>
    <name type="primary">PRNP</name>
    <name type="synonym">PRP</name>
</gene>
<organism>
    <name type="scientific">Capra hircus</name>
    <name type="common">Goat</name>
    <dbReference type="NCBI Taxonomy" id="9925"/>
    <lineage>
        <taxon>Eukaryota</taxon>
        <taxon>Metazoa</taxon>
        <taxon>Chordata</taxon>
        <taxon>Craniata</taxon>
        <taxon>Vertebrata</taxon>
        <taxon>Euteleostomi</taxon>
        <taxon>Mammalia</taxon>
        <taxon>Eutheria</taxon>
        <taxon>Laurasiatheria</taxon>
        <taxon>Artiodactyla</taxon>
        <taxon>Ruminantia</taxon>
        <taxon>Pecora</taxon>
        <taxon>Bovidae</taxon>
        <taxon>Caprinae</taxon>
        <taxon>Capra</taxon>
    </lineage>
</organism>
<dbReference type="EMBL" id="X74758">
    <property type="protein sequence ID" value="CAA52774.1"/>
    <property type="molecule type" value="Genomic_DNA"/>
</dbReference>
<dbReference type="EMBL" id="X91999">
    <property type="protein sequence ID" value="CAA63050.1"/>
    <property type="molecule type" value="Genomic_DNA"/>
</dbReference>
<dbReference type="EMBL" id="S82626">
    <property type="protein sequence ID" value="AAD14409.1"/>
    <property type="molecule type" value="Genomic_DNA"/>
</dbReference>
<dbReference type="PIR" id="S37149">
    <property type="entry name" value="S37149"/>
</dbReference>
<dbReference type="RefSeq" id="XP_005688214.2">
    <property type="nucleotide sequence ID" value="XM_005688157.3"/>
</dbReference>
<dbReference type="SMR" id="P52113"/>
<dbReference type="STRING" id="9925.ENSCHIP00000012425"/>
<dbReference type="GlyCosmos" id="P52113">
    <property type="glycosylation" value="2 sites, No reported glycans"/>
</dbReference>
<dbReference type="Ensembl" id="ENSCHIT00040015254">
    <property type="protein sequence ID" value="ENSCHIP00040011927"/>
    <property type="gene ID" value="ENSCHIG00040007033"/>
</dbReference>
<dbReference type="Ensembl" id="ENSCHIT00040015259">
    <property type="protein sequence ID" value="ENSCHIP00040011932"/>
    <property type="gene ID" value="ENSCHIG00040007033"/>
</dbReference>
<dbReference type="Ensembl" id="ENSCHIT00040015267">
    <property type="protein sequence ID" value="ENSCHIP00040011940"/>
    <property type="gene ID" value="ENSCHIG00040007033"/>
</dbReference>
<dbReference type="GeneID" id="102169975"/>
<dbReference type="CTD" id="5621"/>
<dbReference type="OrthoDB" id="9048788at2759"/>
<dbReference type="Proteomes" id="UP000291000">
    <property type="component" value="Unassembled WGS sequence"/>
</dbReference>
<dbReference type="Proteomes" id="UP000694566">
    <property type="component" value="Unplaced"/>
</dbReference>
<dbReference type="GO" id="GO:0005794">
    <property type="term" value="C:Golgi apparatus"/>
    <property type="evidence" value="ECO:0007669"/>
    <property type="project" value="UniProtKB-SubCell"/>
</dbReference>
<dbReference type="GO" id="GO:0005886">
    <property type="term" value="C:plasma membrane"/>
    <property type="evidence" value="ECO:0007669"/>
    <property type="project" value="UniProtKB-SubCell"/>
</dbReference>
<dbReference type="GO" id="GO:0098552">
    <property type="term" value="C:side of membrane"/>
    <property type="evidence" value="ECO:0007669"/>
    <property type="project" value="UniProtKB-KW"/>
</dbReference>
<dbReference type="GO" id="GO:0005507">
    <property type="term" value="F:copper ion binding"/>
    <property type="evidence" value="ECO:0000250"/>
    <property type="project" value="UniProtKB"/>
</dbReference>
<dbReference type="GO" id="GO:0051260">
    <property type="term" value="P:protein homooligomerization"/>
    <property type="evidence" value="ECO:0007669"/>
    <property type="project" value="InterPro"/>
</dbReference>
<dbReference type="FunFam" id="1.10.790.10:FF:000001">
    <property type="entry name" value="Major prion protein"/>
    <property type="match status" value="1"/>
</dbReference>
<dbReference type="Gene3D" id="1.10.790.10">
    <property type="entry name" value="Prion/Doppel protein, beta-ribbon domain"/>
    <property type="match status" value="1"/>
</dbReference>
<dbReference type="InterPro" id="IPR000817">
    <property type="entry name" value="Prion"/>
</dbReference>
<dbReference type="InterPro" id="IPR036924">
    <property type="entry name" value="Prion/Doppel_b-ribbon_dom_sf"/>
</dbReference>
<dbReference type="InterPro" id="IPR022416">
    <property type="entry name" value="Prion/Doppel_prot_b-ribbon_dom"/>
</dbReference>
<dbReference type="InterPro" id="IPR020949">
    <property type="entry name" value="Prion_copper_b_octapeptide"/>
</dbReference>
<dbReference type="InterPro" id="IPR025860">
    <property type="entry name" value="Prion_N"/>
</dbReference>
<dbReference type="PANTHER" id="PTHR15506">
    <property type="entry name" value="DOPPEL PRION"/>
    <property type="match status" value="1"/>
</dbReference>
<dbReference type="PANTHER" id="PTHR15506:SF2">
    <property type="entry name" value="MAJOR PRION PROTEIN"/>
    <property type="match status" value="1"/>
</dbReference>
<dbReference type="Pfam" id="PF00377">
    <property type="entry name" value="Prion"/>
    <property type="match status" value="1"/>
</dbReference>
<dbReference type="Pfam" id="PF11587">
    <property type="entry name" value="Prion_bPrPp"/>
    <property type="match status" value="1"/>
</dbReference>
<dbReference type="Pfam" id="PF03991">
    <property type="entry name" value="Prion_octapep"/>
    <property type="match status" value="1"/>
</dbReference>
<dbReference type="PRINTS" id="PR00341">
    <property type="entry name" value="PRION"/>
</dbReference>
<dbReference type="SMART" id="SM00157">
    <property type="entry name" value="PRP"/>
    <property type="match status" value="1"/>
</dbReference>
<dbReference type="SUPFAM" id="SSF54098">
    <property type="entry name" value="Prion-like"/>
    <property type="match status" value="1"/>
</dbReference>
<dbReference type="PROSITE" id="PS00291">
    <property type="entry name" value="PRION_1"/>
    <property type="match status" value="1"/>
</dbReference>
<dbReference type="PROSITE" id="PS00706">
    <property type="entry name" value="PRION_2"/>
    <property type="match status" value="1"/>
</dbReference>
<evidence type="ECO:0000250" key="1"/>
<evidence type="ECO:0000250" key="2">
    <source>
        <dbReference type="UniProtKB" id="P04156"/>
    </source>
</evidence>
<evidence type="ECO:0000250" key="3">
    <source>
        <dbReference type="UniProtKB" id="P04273"/>
    </source>
</evidence>
<evidence type="ECO:0000250" key="4">
    <source>
        <dbReference type="UniProtKB" id="P04925"/>
    </source>
</evidence>
<evidence type="ECO:0000255" key="5"/>
<evidence type="ECO:0000256" key="6">
    <source>
        <dbReference type="SAM" id="MobiDB-lite"/>
    </source>
</evidence>
<evidence type="ECO:0000269" key="7">
    <source>
    </source>
</evidence>
<evidence type="ECO:0000305" key="8"/>
<comment type="function">
    <text evidence="2 4">Its primary physiological function is unclear. Has cytoprotective activity against internal or environmental stresses. May play a role in neuronal development and synaptic plasticity. May be required for neuronal myelin sheath maintenance. May play a role in iron uptake and iron homeostasis. Soluble oligomers are toxic to cultured neuroblastoma cells and induce apoptosis (in vitro). Association with GPC1 (via its heparan sulfate chains) targets PRNP to lipid rafts. Also provides Cu(2+) or Zn(2+) for the ascorbate-mediated GPC1 deaminase degradation of its heparan sulfate side chains (By similarity).</text>
</comment>
<comment type="subunit">
    <text evidence="2 4">Monomer and homodimer. Has a tendency to aggregate into amyloid fibrils containing a cross-beta spine, formed by a steric zipper of superposed beta-strands. Soluble oligomers may represent an intermediate stage on the path to fibril formation. Copper binding may promote oligomerization. Interacts with GRB2, APP, ERI3/PRNPIP and SYN1. Mislocalized cytosolically exposed PrP interacts with MGRN1; this interaction alters MGRN1 subcellular location and causes lysosomal enlargement. Interacts with KIAA1191.</text>
</comment>
<comment type="subcellular location">
    <subcellularLocation>
        <location evidence="2">Cell membrane</location>
        <topology evidence="2">Lipid-anchor</topology>
        <topology evidence="2">GPI-anchor</topology>
    </subcellularLocation>
    <subcellularLocation>
        <location evidence="4">Golgi apparatus</location>
    </subcellularLocation>
    <text evidence="2">Targeted to lipid rafts via association with the heparan sulfate chains of GPC1. Colocates, in the presence of Cu(2+), to vesicles in para- and perinuclear regions, where both proteins undergo internalization. Heparin displaces PRNP from lipid rafts and promotes endocytosis.</text>
</comment>
<comment type="domain">
    <text evidence="2">The normal, monomeric form has a mainly alpha-helical structure. The disease-associated, protease-resistant form forms amyloid fibrils containing a cross-beta spine, formed by a steric zipper of superposed beta-strands. Disease mutations may favor intermolecular contacts via short beta strands, and may thereby trigger oligomerization.</text>
</comment>
<comment type="domain">
    <text evidence="2">Contains an N-terminal region composed of octamer repeats. At low copper concentrations, the sidechains of His residues from three or four repeats contribute to the binding of a single copper ion. Alternatively, a copper ion can be bound by interaction with the sidechain and backbone amide nitrogen of a single His residue. The observed copper binding stoichiometry suggests that two repeat regions cooperate to stabilize the binding of a single copper ion. At higher copper concentrations, each octamer can bind one copper ion by interactions with the His sidechain and Gly backbone atoms. A mixture of binding types may occur, especially in the case of octamer repeat expansion. Copper binding may stabilize the conformation of this region and may promote oligomerization.</text>
</comment>
<comment type="disease">
    <text evidence="7">Polymorphism at position 142 may be related to the alleles of scrapie incubation-control (SIC) gene in this species.</text>
</comment>
<comment type="disease">
    <text evidence="8">Found in high quantity in the brain of humans and animals infected with degenerative neurological diseases such as kuru, Creutzfeldt-Jakob disease (CJD), Gerstmann-Straussler syndrome (GSS), scrapie, bovine spongiform encephalopathy (BSE), transmissible mink encephalopathy (TME), etc.</text>
</comment>
<comment type="similarity">
    <text evidence="8">Belongs to the prion family.</text>
</comment>
<sequence>MVKSHIGSWILVLFVAMWSDVGLCKKRPKPGGGWNTGGSRYPGQGSPGGNRYPPQGGGGWGQPHGGGWGQPHGGGWGQPHGGGWGQPHGGGGWGQGGSHSQWNKPSKPKTNMKHVAGAAAAGAVVGGLGGYMLGSAMSRPLIHFGNDYEDRYYRENMYRYPNQVYYRPVDQYSNQNNFVHDCVNITVKQHTVTTTTKGENFTETDIKIMERVVEQMCITQYQRESQAYYQRGASVILFSPPPVILLISFLIFLIVG</sequence>
<protein>
    <recommendedName>
        <fullName>Major prion protein</fullName>
        <shortName>PrP</shortName>
    </recommendedName>
    <cdAntigenName>CD230</cdAntigenName>
</protein>
<keyword id="KW-0034">Amyloid</keyword>
<keyword id="KW-1003">Cell membrane</keyword>
<keyword id="KW-0186">Copper</keyword>
<keyword id="KW-1015">Disulfide bond</keyword>
<keyword id="KW-0325">Glycoprotein</keyword>
<keyword id="KW-0333">Golgi apparatus</keyword>
<keyword id="KW-0336">GPI-anchor</keyword>
<keyword id="KW-0449">Lipoprotein</keyword>
<keyword id="KW-0472">Membrane</keyword>
<keyword id="KW-0479">Metal-binding</keyword>
<keyword id="KW-0640">Prion</keyword>
<keyword id="KW-1185">Reference proteome</keyword>
<keyword id="KW-0677">Repeat</keyword>
<keyword id="KW-0732">Signal</keyword>
<keyword id="KW-0862">Zinc</keyword>